<proteinExistence type="inferred from homology"/>
<reference key="1">
    <citation type="journal article" date="2010" name="Genome Biol. Evol.">
        <title>Continuing evolution of Burkholderia mallei through genome reduction and large-scale rearrangements.</title>
        <authorList>
            <person name="Losada L."/>
            <person name="Ronning C.M."/>
            <person name="DeShazer D."/>
            <person name="Woods D."/>
            <person name="Fedorova N."/>
            <person name="Kim H.S."/>
            <person name="Shabalina S.A."/>
            <person name="Pearson T.R."/>
            <person name="Brinkac L."/>
            <person name="Tan P."/>
            <person name="Nandi T."/>
            <person name="Crabtree J."/>
            <person name="Badger J."/>
            <person name="Beckstrom-Sternberg S."/>
            <person name="Saqib M."/>
            <person name="Schutzer S.E."/>
            <person name="Keim P."/>
            <person name="Nierman W.C."/>
        </authorList>
    </citation>
    <scope>NUCLEOTIDE SEQUENCE [LARGE SCALE GENOMIC DNA]</scope>
    <source>
        <strain>SAVP1</strain>
    </source>
</reference>
<comment type="function">
    <text evidence="1">Catalyzes the methyl esterification of L-isoaspartyl residues in peptides and proteins that result from spontaneous decomposition of normal L-aspartyl and L-asparaginyl residues. It plays a role in the repair and/or degradation of damaged proteins.</text>
</comment>
<comment type="catalytic activity">
    <reaction evidence="1">
        <text>[protein]-L-isoaspartate + S-adenosyl-L-methionine = [protein]-L-isoaspartate alpha-methyl ester + S-adenosyl-L-homocysteine</text>
        <dbReference type="Rhea" id="RHEA:12705"/>
        <dbReference type="Rhea" id="RHEA-COMP:12143"/>
        <dbReference type="Rhea" id="RHEA-COMP:12144"/>
        <dbReference type="ChEBI" id="CHEBI:57856"/>
        <dbReference type="ChEBI" id="CHEBI:59789"/>
        <dbReference type="ChEBI" id="CHEBI:90596"/>
        <dbReference type="ChEBI" id="CHEBI:90598"/>
        <dbReference type="EC" id="2.1.1.77"/>
    </reaction>
</comment>
<comment type="subcellular location">
    <subcellularLocation>
        <location evidence="1">Cytoplasm</location>
    </subcellularLocation>
</comment>
<comment type="similarity">
    <text evidence="1">Belongs to the methyltransferase superfamily. L-isoaspartyl/D-aspartyl protein methyltransferase family.</text>
</comment>
<evidence type="ECO:0000255" key="1">
    <source>
        <dbReference type="HAMAP-Rule" id="MF_00090"/>
    </source>
</evidence>
<evidence type="ECO:0000256" key="2">
    <source>
        <dbReference type="SAM" id="MobiDB-lite"/>
    </source>
</evidence>
<name>PIMT_BURMS</name>
<keyword id="KW-0963">Cytoplasm</keyword>
<keyword id="KW-0489">Methyltransferase</keyword>
<keyword id="KW-0949">S-adenosyl-L-methionine</keyword>
<keyword id="KW-0808">Transferase</keyword>
<gene>
    <name evidence="1" type="primary">pcm</name>
    <name type="ordered locus">BMASAVP1_A1846</name>
</gene>
<organism>
    <name type="scientific">Burkholderia mallei (strain SAVP1)</name>
    <dbReference type="NCBI Taxonomy" id="320388"/>
    <lineage>
        <taxon>Bacteria</taxon>
        <taxon>Pseudomonadati</taxon>
        <taxon>Pseudomonadota</taxon>
        <taxon>Betaproteobacteria</taxon>
        <taxon>Burkholderiales</taxon>
        <taxon>Burkholderiaceae</taxon>
        <taxon>Burkholderia</taxon>
        <taxon>pseudomallei group</taxon>
    </lineage>
</organism>
<feature type="chain" id="PRO_0000351832" description="Protein-L-isoaspartate O-methyltransferase">
    <location>
        <begin position="1"/>
        <end position="322"/>
    </location>
</feature>
<feature type="region of interest" description="Disordered" evidence="2">
    <location>
        <begin position="1"/>
        <end position="101"/>
    </location>
</feature>
<feature type="compositionally biased region" description="Basic and acidic residues" evidence="2">
    <location>
        <begin position="14"/>
        <end position="29"/>
    </location>
</feature>
<feature type="compositionally biased region" description="Low complexity" evidence="2">
    <location>
        <begin position="33"/>
        <end position="51"/>
    </location>
</feature>
<feature type="compositionally biased region" description="Low complexity" evidence="2">
    <location>
        <begin position="76"/>
        <end position="91"/>
    </location>
</feature>
<feature type="active site" evidence="1">
    <location>
        <position position="170"/>
    </location>
</feature>
<accession>A1V4L2</accession>
<sequence>MSGERAKRFPLALEDLKREPRKPEGRVAERQAAGDAARQRLTAAAAVPAAASPIVPERRAPHGGVFAAKPARAKQHAPAAPGAAKRAPQGGAKQGDRSAAPNVALSGALALTSERVRERMVERLRANGVADPRVLAAMSAVPRHMFVDPGLAAQAYEDAALPIGHQQTISKPSVVARMIELAAAGRALERVLEIGTGCGYQAAVLSRVARDVYSIERVRPLYERAKLNLRPLRVPNIRLHYGDGRVGLPAAAPFDAIVIAAAGLDVPRALLEQLAIGGRLVAPVGEQAGEQVLTLVERVAPAQWRESRLDRVFFVPLKSGVI</sequence>
<protein>
    <recommendedName>
        <fullName evidence="1">Protein-L-isoaspartate O-methyltransferase</fullName>
        <ecNumber evidence="1">2.1.1.77</ecNumber>
    </recommendedName>
    <alternativeName>
        <fullName evidence="1">L-isoaspartyl protein carboxyl methyltransferase</fullName>
    </alternativeName>
    <alternativeName>
        <fullName evidence="1">Protein L-isoaspartyl methyltransferase</fullName>
    </alternativeName>
    <alternativeName>
        <fullName evidence="1">Protein-beta-aspartate methyltransferase</fullName>
        <shortName evidence="1">PIMT</shortName>
    </alternativeName>
</protein>
<dbReference type="EC" id="2.1.1.77" evidence="1"/>
<dbReference type="EMBL" id="CP000526">
    <property type="protein sequence ID" value="ABM50520.1"/>
    <property type="molecule type" value="Genomic_DNA"/>
</dbReference>
<dbReference type="RefSeq" id="WP_011203980.1">
    <property type="nucleotide sequence ID" value="NC_008785.1"/>
</dbReference>
<dbReference type="SMR" id="A1V4L2"/>
<dbReference type="KEGG" id="bmv:BMASAVP1_A1846"/>
<dbReference type="HOGENOM" id="CLU_055432_1_0_4"/>
<dbReference type="GO" id="GO:0005737">
    <property type="term" value="C:cytoplasm"/>
    <property type="evidence" value="ECO:0007669"/>
    <property type="project" value="UniProtKB-SubCell"/>
</dbReference>
<dbReference type="GO" id="GO:0004719">
    <property type="term" value="F:protein-L-isoaspartate (D-aspartate) O-methyltransferase activity"/>
    <property type="evidence" value="ECO:0007669"/>
    <property type="project" value="UniProtKB-UniRule"/>
</dbReference>
<dbReference type="GO" id="GO:0032259">
    <property type="term" value="P:methylation"/>
    <property type="evidence" value="ECO:0007669"/>
    <property type="project" value="UniProtKB-KW"/>
</dbReference>
<dbReference type="GO" id="GO:0036211">
    <property type="term" value="P:protein modification process"/>
    <property type="evidence" value="ECO:0007669"/>
    <property type="project" value="UniProtKB-UniRule"/>
</dbReference>
<dbReference type="GO" id="GO:0030091">
    <property type="term" value="P:protein repair"/>
    <property type="evidence" value="ECO:0007669"/>
    <property type="project" value="UniProtKB-UniRule"/>
</dbReference>
<dbReference type="CDD" id="cd02440">
    <property type="entry name" value="AdoMet_MTases"/>
    <property type="match status" value="1"/>
</dbReference>
<dbReference type="FunFam" id="3.40.50.150:FF:000010">
    <property type="entry name" value="Protein-L-isoaspartate O-methyltransferase"/>
    <property type="match status" value="1"/>
</dbReference>
<dbReference type="Gene3D" id="3.40.50.150">
    <property type="entry name" value="Vaccinia Virus protein VP39"/>
    <property type="match status" value="1"/>
</dbReference>
<dbReference type="HAMAP" id="MF_00090">
    <property type="entry name" value="PIMT"/>
    <property type="match status" value="1"/>
</dbReference>
<dbReference type="InterPro" id="IPR000682">
    <property type="entry name" value="PCMT"/>
</dbReference>
<dbReference type="InterPro" id="IPR029063">
    <property type="entry name" value="SAM-dependent_MTases_sf"/>
</dbReference>
<dbReference type="NCBIfam" id="TIGR00080">
    <property type="entry name" value="pimt"/>
    <property type="match status" value="1"/>
</dbReference>
<dbReference type="NCBIfam" id="NF001453">
    <property type="entry name" value="PRK00312.1"/>
    <property type="match status" value="1"/>
</dbReference>
<dbReference type="PANTHER" id="PTHR11579">
    <property type="entry name" value="PROTEIN-L-ISOASPARTATE O-METHYLTRANSFERASE"/>
    <property type="match status" value="1"/>
</dbReference>
<dbReference type="PANTHER" id="PTHR11579:SF0">
    <property type="entry name" value="PROTEIN-L-ISOASPARTATE(D-ASPARTATE) O-METHYLTRANSFERASE"/>
    <property type="match status" value="1"/>
</dbReference>
<dbReference type="Pfam" id="PF01135">
    <property type="entry name" value="PCMT"/>
    <property type="match status" value="1"/>
</dbReference>
<dbReference type="SUPFAM" id="SSF53335">
    <property type="entry name" value="S-adenosyl-L-methionine-dependent methyltransferases"/>
    <property type="match status" value="1"/>
</dbReference>
<dbReference type="PROSITE" id="PS01279">
    <property type="entry name" value="PCMT"/>
    <property type="match status" value="1"/>
</dbReference>